<reference key="1">
    <citation type="submission" date="2008-06" db="EMBL/GenBank/DDBJ databases">
        <title>Complete sequence of Pelodictyon phaeoclathratiforme BU-1.</title>
        <authorList>
            <consortium name="US DOE Joint Genome Institute"/>
            <person name="Lucas S."/>
            <person name="Copeland A."/>
            <person name="Lapidus A."/>
            <person name="Glavina del Rio T."/>
            <person name="Dalin E."/>
            <person name="Tice H."/>
            <person name="Bruce D."/>
            <person name="Goodwin L."/>
            <person name="Pitluck S."/>
            <person name="Schmutz J."/>
            <person name="Larimer F."/>
            <person name="Land M."/>
            <person name="Hauser L."/>
            <person name="Kyrpides N."/>
            <person name="Mikhailova N."/>
            <person name="Liu Z."/>
            <person name="Li T."/>
            <person name="Zhao F."/>
            <person name="Overmann J."/>
            <person name="Bryant D.A."/>
            <person name="Richardson P."/>
        </authorList>
    </citation>
    <scope>NUCLEOTIDE SEQUENCE [LARGE SCALE GENOMIC DNA]</scope>
    <source>
        <strain>DSM 5477 / BU-1</strain>
    </source>
</reference>
<protein>
    <recommendedName>
        <fullName evidence="1">Proline--tRNA ligase</fullName>
        <ecNumber evidence="1">6.1.1.15</ecNumber>
    </recommendedName>
    <alternativeName>
        <fullName evidence="1">Prolyl-tRNA synthetase</fullName>
        <shortName evidence="1">ProRS</shortName>
    </alternativeName>
</protein>
<name>SYP_PELPB</name>
<proteinExistence type="inferred from homology"/>
<organism>
    <name type="scientific">Pelodictyon phaeoclathratiforme (strain DSM 5477 / BU-1)</name>
    <dbReference type="NCBI Taxonomy" id="324925"/>
    <lineage>
        <taxon>Bacteria</taxon>
        <taxon>Pseudomonadati</taxon>
        <taxon>Chlorobiota</taxon>
        <taxon>Chlorobiia</taxon>
        <taxon>Chlorobiales</taxon>
        <taxon>Chlorobiaceae</taxon>
        <taxon>Chlorobium/Pelodictyon group</taxon>
        <taxon>Pelodictyon</taxon>
    </lineage>
</organism>
<feature type="chain" id="PRO_1000215569" description="Proline--tRNA ligase">
    <location>
        <begin position="1"/>
        <end position="481"/>
    </location>
</feature>
<accession>B4SG51</accession>
<comment type="function">
    <text evidence="1">Catalyzes the attachment of proline to tRNA(Pro) in a two-step reaction: proline is first activated by ATP to form Pro-AMP and then transferred to the acceptor end of tRNA(Pro).</text>
</comment>
<comment type="catalytic activity">
    <reaction evidence="1">
        <text>tRNA(Pro) + L-proline + ATP = L-prolyl-tRNA(Pro) + AMP + diphosphate</text>
        <dbReference type="Rhea" id="RHEA:14305"/>
        <dbReference type="Rhea" id="RHEA-COMP:9700"/>
        <dbReference type="Rhea" id="RHEA-COMP:9702"/>
        <dbReference type="ChEBI" id="CHEBI:30616"/>
        <dbReference type="ChEBI" id="CHEBI:33019"/>
        <dbReference type="ChEBI" id="CHEBI:60039"/>
        <dbReference type="ChEBI" id="CHEBI:78442"/>
        <dbReference type="ChEBI" id="CHEBI:78532"/>
        <dbReference type="ChEBI" id="CHEBI:456215"/>
        <dbReference type="EC" id="6.1.1.15"/>
    </reaction>
</comment>
<comment type="subunit">
    <text evidence="1">Homodimer.</text>
</comment>
<comment type="subcellular location">
    <subcellularLocation>
        <location evidence="1">Cytoplasm</location>
    </subcellularLocation>
</comment>
<comment type="domain">
    <text evidence="1">Consists of three domains: the N-terminal catalytic domain, the anticodon-binding domain and the C-terminal extension.</text>
</comment>
<comment type="similarity">
    <text evidence="1">Belongs to the class-II aminoacyl-tRNA synthetase family. ProS type 3 subfamily.</text>
</comment>
<evidence type="ECO:0000255" key="1">
    <source>
        <dbReference type="HAMAP-Rule" id="MF_01571"/>
    </source>
</evidence>
<sequence>MADKITSRSEDYSQWYIDLVRSAKLADYADVRGCMDIRPNGYAIWEKMQAALDRMFKETGHVNAYFPLFIPESFIAKEAEHIEGFAPECAVVTHGGGEELAEKLYIRPTSETIIWSSYKKWIQSYRDLPILINQWANVVRWEMRTRLFLRTTEFLWQEGHTAHANPEESQEEVLRMINVYKTFAEEYMAMPVIMGKKTDNEKFAGAVDTWCIEAMMQDSKALQAGTSHNLGQNFAKAFDCQFQTKDGVLDYVWATSWGVSTRLIGALIMAHSDDRGLVLPPKLATRQVVIIPILRGDKAAVIERANALAQELNKNGIPSFVDSSEQNSPGWKFAEYELQGIPIRIELGPRDIEKGICIAARRDTLEKTELALDETLPDQISEILNTIQESMFERALQFRTEHTFEVQSYEEFKVAVEKGFVIAHWDGTAETEAKIKAETKATIRVLPEEADYIAQYRIDEPGTCIYSGKPAARKVVFAKAY</sequence>
<gene>
    <name evidence="1" type="primary">proS</name>
    <name type="ordered locus">Ppha_1083</name>
</gene>
<dbReference type="EC" id="6.1.1.15" evidence="1"/>
<dbReference type="EMBL" id="CP001110">
    <property type="protein sequence ID" value="ACF43362.1"/>
    <property type="molecule type" value="Genomic_DNA"/>
</dbReference>
<dbReference type="RefSeq" id="WP_012507854.1">
    <property type="nucleotide sequence ID" value="NC_011060.1"/>
</dbReference>
<dbReference type="SMR" id="B4SG51"/>
<dbReference type="STRING" id="324925.Ppha_1083"/>
<dbReference type="KEGG" id="pph:Ppha_1083"/>
<dbReference type="eggNOG" id="COG0442">
    <property type="taxonomic scope" value="Bacteria"/>
</dbReference>
<dbReference type="HOGENOM" id="CLU_001882_4_2_10"/>
<dbReference type="OrthoDB" id="9809052at2"/>
<dbReference type="Proteomes" id="UP000002724">
    <property type="component" value="Chromosome"/>
</dbReference>
<dbReference type="GO" id="GO:0017101">
    <property type="term" value="C:aminoacyl-tRNA synthetase multienzyme complex"/>
    <property type="evidence" value="ECO:0007669"/>
    <property type="project" value="TreeGrafter"/>
</dbReference>
<dbReference type="GO" id="GO:0005737">
    <property type="term" value="C:cytoplasm"/>
    <property type="evidence" value="ECO:0007669"/>
    <property type="project" value="UniProtKB-SubCell"/>
</dbReference>
<dbReference type="GO" id="GO:0005524">
    <property type="term" value="F:ATP binding"/>
    <property type="evidence" value="ECO:0007669"/>
    <property type="project" value="UniProtKB-UniRule"/>
</dbReference>
<dbReference type="GO" id="GO:0004827">
    <property type="term" value="F:proline-tRNA ligase activity"/>
    <property type="evidence" value="ECO:0007669"/>
    <property type="project" value="UniProtKB-UniRule"/>
</dbReference>
<dbReference type="GO" id="GO:0006433">
    <property type="term" value="P:prolyl-tRNA aminoacylation"/>
    <property type="evidence" value="ECO:0007669"/>
    <property type="project" value="UniProtKB-UniRule"/>
</dbReference>
<dbReference type="CDD" id="cd00862">
    <property type="entry name" value="ProRS_anticodon_zinc"/>
    <property type="match status" value="1"/>
</dbReference>
<dbReference type="CDD" id="cd00778">
    <property type="entry name" value="ProRS_core_arch_euk"/>
    <property type="match status" value="1"/>
</dbReference>
<dbReference type="FunFam" id="3.30.930.10:FF:000023">
    <property type="entry name" value="Proline--tRNA ligase"/>
    <property type="match status" value="1"/>
</dbReference>
<dbReference type="Gene3D" id="3.40.50.800">
    <property type="entry name" value="Anticodon-binding domain"/>
    <property type="match status" value="1"/>
</dbReference>
<dbReference type="Gene3D" id="3.30.930.10">
    <property type="entry name" value="Bira Bifunctional Protein, Domain 2"/>
    <property type="match status" value="1"/>
</dbReference>
<dbReference type="Gene3D" id="3.30.110.30">
    <property type="entry name" value="C-terminal domain of ProRS"/>
    <property type="match status" value="1"/>
</dbReference>
<dbReference type="HAMAP" id="MF_01571">
    <property type="entry name" value="Pro_tRNA_synth_type3"/>
    <property type="match status" value="1"/>
</dbReference>
<dbReference type="InterPro" id="IPR002314">
    <property type="entry name" value="aa-tRNA-synt_IIb"/>
</dbReference>
<dbReference type="InterPro" id="IPR006195">
    <property type="entry name" value="aa-tRNA-synth_II"/>
</dbReference>
<dbReference type="InterPro" id="IPR045864">
    <property type="entry name" value="aa-tRNA-synth_II/BPL/LPL"/>
</dbReference>
<dbReference type="InterPro" id="IPR004154">
    <property type="entry name" value="Anticodon-bd"/>
</dbReference>
<dbReference type="InterPro" id="IPR036621">
    <property type="entry name" value="Anticodon-bd_dom_sf"/>
</dbReference>
<dbReference type="InterPro" id="IPR002316">
    <property type="entry name" value="Pro-tRNA-ligase_IIa"/>
</dbReference>
<dbReference type="InterPro" id="IPR004499">
    <property type="entry name" value="Pro-tRNA-ligase_IIa_arc-type"/>
</dbReference>
<dbReference type="InterPro" id="IPR016061">
    <property type="entry name" value="Pro-tRNA_ligase_II_C"/>
</dbReference>
<dbReference type="InterPro" id="IPR017449">
    <property type="entry name" value="Pro-tRNA_synth_II"/>
</dbReference>
<dbReference type="InterPro" id="IPR033721">
    <property type="entry name" value="ProRS_core_arch_euk"/>
</dbReference>
<dbReference type="NCBIfam" id="TIGR00408">
    <property type="entry name" value="proS_fam_I"/>
    <property type="match status" value="1"/>
</dbReference>
<dbReference type="PANTHER" id="PTHR43382:SF2">
    <property type="entry name" value="BIFUNCTIONAL GLUTAMATE_PROLINE--TRNA LIGASE"/>
    <property type="match status" value="1"/>
</dbReference>
<dbReference type="PANTHER" id="PTHR43382">
    <property type="entry name" value="PROLYL-TRNA SYNTHETASE"/>
    <property type="match status" value="1"/>
</dbReference>
<dbReference type="Pfam" id="PF03129">
    <property type="entry name" value="HGTP_anticodon"/>
    <property type="match status" value="1"/>
</dbReference>
<dbReference type="Pfam" id="PF09180">
    <property type="entry name" value="ProRS-C_1"/>
    <property type="match status" value="1"/>
</dbReference>
<dbReference type="Pfam" id="PF00587">
    <property type="entry name" value="tRNA-synt_2b"/>
    <property type="match status" value="1"/>
</dbReference>
<dbReference type="PRINTS" id="PR01046">
    <property type="entry name" value="TRNASYNTHPRO"/>
</dbReference>
<dbReference type="SMART" id="SM00946">
    <property type="entry name" value="ProRS-C_1"/>
    <property type="match status" value="1"/>
</dbReference>
<dbReference type="SUPFAM" id="SSF64586">
    <property type="entry name" value="C-terminal domain of ProRS"/>
    <property type="match status" value="1"/>
</dbReference>
<dbReference type="SUPFAM" id="SSF52954">
    <property type="entry name" value="Class II aaRS ABD-related"/>
    <property type="match status" value="1"/>
</dbReference>
<dbReference type="SUPFAM" id="SSF55681">
    <property type="entry name" value="Class II aaRS and biotin synthetases"/>
    <property type="match status" value="1"/>
</dbReference>
<dbReference type="PROSITE" id="PS50862">
    <property type="entry name" value="AA_TRNA_LIGASE_II"/>
    <property type="match status" value="1"/>
</dbReference>
<keyword id="KW-0030">Aminoacyl-tRNA synthetase</keyword>
<keyword id="KW-0067">ATP-binding</keyword>
<keyword id="KW-0963">Cytoplasm</keyword>
<keyword id="KW-0436">Ligase</keyword>
<keyword id="KW-0547">Nucleotide-binding</keyword>
<keyword id="KW-0648">Protein biosynthesis</keyword>
<keyword id="KW-1185">Reference proteome</keyword>